<reference key="1">
    <citation type="journal article" date="1999" name="Nature">
        <title>Genomic sequence comparison of two unrelated isolates of the human gastric pathogen Helicobacter pylori.</title>
        <authorList>
            <person name="Alm R.A."/>
            <person name="Ling L.-S.L."/>
            <person name="Moir D.T."/>
            <person name="King B.L."/>
            <person name="Brown E.D."/>
            <person name="Doig P.C."/>
            <person name="Smith D.R."/>
            <person name="Noonan B."/>
            <person name="Guild B.C."/>
            <person name="deJonge B.L."/>
            <person name="Carmel G."/>
            <person name="Tummino P.J."/>
            <person name="Caruso A."/>
            <person name="Uria-Nickelsen M."/>
            <person name="Mills D.M."/>
            <person name="Ives C."/>
            <person name="Gibson R."/>
            <person name="Merberg D."/>
            <person name="Mills S.D."/>
            <person name="Jiang Q."/>
            <person name="Taylor D.E."/>
            <person name="Vovis G.F."/>
            <person name="Trust T.J."/>
        </authorList>
    </citation>
    <scope>NUCLEOTIDE SEQUENCE [LARGE SCALE GENOMIC DNA]</scope>
    <source>
        <strain>J99 / ATCC 700824</strain>
    </source>
</reference>
<sequence length="152" mass="17146">MEKLEVGQLAPDFRLKNSDGVEISLKDLLHKKVVLYFYPKDNTPGCTLEAKDFSALFSEFEKKNAVVVGVSPDNSQSHQKFISQCSLNVILLCDEDKKVANLYKAYGKRMLYGKEHLGIIRSTFIINTQGVLEKCFYNVKAKGHAQKVLESL</sequence>
<feature type="chain" id="PRO_0000135139" description="Putative peroxiredoxin bcp">
    <location>
        <begin position="1"/>
        <end position="152"/>
    </location>
</feature>
<feature type="domain" description="Thioredoxin" evidence="3">
    <location>
        <begin position="4"/>
        <end position="152"/>
    </location>
</feature>
<feature type="active site" description="Cysteine sulfenic acid (-SOH) intermediate" evidence="2">
    <location>
        <position position="46"/>
    </location>
</feature>
<feature type="disulfide bond" description="Redox-active" evidence="2">
    <location>
        <begin position="46"/>
        <end position="85"/>
    </location>
</feature>
<keyword id="KW-0049">Antioxidant</keyword>
<keyword id="KW-1015">Disulfide bond</keyword>
<keyword id="KW-0560">Oxidoreductase</keyword>
<keyword id="KW-0575">Peroxidase</keyword>
<keyword id="KW-0676">Redox-active center</keyword>
<gene>
    <name type="primary">bcp</name>
    <name type="ordered locus">jhp_0124</name>
</gene>
<organism>
    <name type="scientific">Helicobacter pylori (strain J99 / ATCC 700824)</name>
    <name type="common">Campylobacter pylori J99</name>
    <dbReference type="NCBI Taxonomy" id="85963"/>
    <lineage>
        <taxon>Bacteria</taxon>
        <taxon>Pseudomonadati</taxon>
        <taxon>Campylobacterota</taxon>
        <taxon>Epsilonproteobacteria</taxon>
        <taxon>Campylobacterales</taxon>
        <taxon>Helicobacteraceae</taxon>
        <taxon>Helicobacter</taxon>
    </lineage>
</organism>
<evidence type="ECO:0000250" key="1">
    <source>
        <dbReference type="UniProtKB" id="P0AE52"/>
    </source>
</evidence>
<evidence type="ECO:0000250" key="2">
    <source>
        <dbReference type="UniProtKB" id="Q8P9V9"/>
    </source>
</evidence>
<evidence type="ECO:0000255" key="3">
    <source>
        <dbReference type="PROSITE-ProRule" id="PRU00691"/>
    </source>
</evidence>
<evidence type="ECO:0000305" key="4"/>
<accession>Q9ZMU4</accession>
<proteinExistence type="inferred from homology"/>
<dbReference type="EC" id="1.11.1.24" evidence="1"/>
<dbReference type="EMBL" id="AE001439">
    <property type="protein sequence ID" value="AAD05701.1"/>
    <property type="molecule type" value="Genomic_DNA"/>
</dbReference>
<dbReference type="PIR" id="F71971">
    <property type="entry name" value="F71971"/>
</dbReference>
<dbReference type="RefSeq" id="WP_000412964.1">
    <property type="nucleotide sequence ID" value="NZ_CP011330.1"/>
</dbReference>
<dbReference type="SMR" id="Q9ZMU4"/>
<dbReference type="KEGG" id="hpj:jhp_0124"/>
<dbReference type="PATRIC" id="fig|85963.30.peg.901"/>
<dbReference type="eggNOG" id="COG1225">
    <property type="taxonomic scope" value="Bacteria"/>
</dbReference>
<dbReference type="Proteomes" id="UP000000804">
    <property type="component" value="Chromosome"/>
</dbReference>
<dbReference type="GO" id="GO:0005737">
    <property type="term" value="C:cytoplasm"/>
    <property type="evidence" value="ECO:0007669"/>
    <property type="project" value="TreeGrafter"/>
</dbReference>
<dbReference type="GO" id="GO:0008379">
    <property type="term" value="F:thioredoxin peroxidase activity"/>
    <property type="evidence" value="ECO:0007669"/>
    <property type="project" value="TreeGrafter"/>
</dbReference>
<dbReference type="GO" id="GO:0045454">
    <property type="term" value="P:cell redox homeostasis"/>
    <property type="evidence" value="ECO:0007669"/>
    <property type="project" value="TreeGrafter"/>
</dbReference>
<dbReference type="GO" id="GO:0034599">
    <property type="term" value="P:cellular response to oxidative stress"/>
    <property type="evidence" value="ECO:0007669"/>
    <property type="project" value="TreeGrafter"/>
</dbReference>
<dbReference type="CDD" id="cd03017">
    <property type="entry name" value="PRX_BCP"/>
    <property type="match status" value="1"/>
</dbReference>
<dbReference type="FunFam" id="3.40.30.10:FF:000007">
    <property type="entry name" value="Thioredoxin-dependent thiol peroxidase"/>
    <property type="match status" value="1"/>
</dbReference>
<dbReference type="Gene3D" id="3.40.30.10">
    <property type="entry name" value="Glutaredoxin"/>
    <property type="match status" value="1"/>
</dbReference>
<dbReference type="InterPro" id="IPR000866">
    <property type="entry name" value="AhpC/TSA"/>
</dbReference>
<dbReference type="InterPro" id="IPR024706">
    <property type="entry name" value="Peroxiredoxin_AhpC-typ"/>
</dbReference>
<dbReference type="InterPro" id="IPR050924">
    <property type="entry name" value="Peroxiredoxin_BCP/PrxQ"/>
</dbReference>
<dbReference type="InterPro" id="IPR036249">
    <property type="entry name" value="Thioredoxin-like_sf"/>
</dbReference>
<dbReference type="InterPro" id="IPR013766">
    <property type="entry name" value="Thioredoxin_domain"/>
</dbReference>
<dbReference type="PANTHER" id="PTHR42801:SF4">
    <property type="entry name" value="AHPC_TSA FAMILY PROTEIN"/>
    <property type="match status" value="1"/>
</dbReference>
<dbReference type="PANTHER" id="PTHR42801">
    <property type="entry name" value="THIOREDOXIN-DEPENDENT PEROXIDE REDUCTASE"/>
    <property type="match status" value="1"/>
</dbReference>
<dbReference type="Pfam" id="PF00578">
    <property type="entry name" value="AhpC-TSA"/>
    <property type="match status" value="1"/>
</dbReference>
<dbReference type="PIRSF" id="PIRSF000239">
    <property type="entry name" value="AHPC"/>
    <property type="match status" value="1"/>
</dbReference>
<dbReference type="SUPFAM" id="SSF52833">
    <property type="entry name" value="Thioredoxin-like"/>
    <property type="match status" value="1"/>
</dbReference>
<dbReference type="PROSITE" id="PS51352">
    <property type="entry name" value="THIOREDOXIN_2"/>
    <property type="match status" value="1"/>
</dbReference>
<comment type="function">
    <text evidence="1">Thiol-specific peroxidase that catalyzes the reduction of hydrogen peroxide and organic hydroperoxides to water and alcohols, respectively. Plays a role in cell protection against oxidative stress by detoxifying peroxides and as sensor of hydrogen peroxide-mediated signaling events.</text>
</comment>
<comment type="catalytic activity">
    <reaction evidence="1">
        <text>a hydroperoxide + [thioredoxin]-dithiol = an alcohol + [thioredoxin]-disulfide + H2O</text>
        <dbReference type="Rhea" id="RHEA:62620"/>
        <dbReference type="Rhea" id="RHEA-COMP:10698"/>
        <dbReference type="Rhea" id="RHEA-COMP:10700"/>
        <dbReference type="ChEBI" id="CHEBI:15377"/>
        <dbReference type="ChEBI" id="CHEBI:29950"/>
        <dbReference type="ChEBI" id="CHEBI:30879"/>
        <dbReference type="ChEBI" id="CHEBI:35924"/>
        <dbReference type="ChEBI" id="CHEBI:50058"/>
        <dbReference type="EC" id="1.11.1.24"/>
    </reaction>
</comment>
<comment type="subunit">
    <text evidence="1">Monomer.</text>
</comment>
<comment type="miscellaneous">
    <text evidence="2">The active site is a conserved redox-active cysteine residue, the peroxidatic cysteine (C(P)), which makes the nucleophilic attack on the peroxide substrate. The peroxide oxidizes the C(P)-SH to cysteine sulfenic acid (C(P)-SOH), which then reacts with another cysteine residue, the resolving cysteine (C(R)), to form a disulfide bridge. The disulfide is subsequently reduced by an appropriate electron donor to complete the catalytic cycle. In this atypical 2-Cys peroxiredoxin, C(R) is present in the same subunit to form an intramolecular disulfide. The disulfide is subsequently reduced by thioredoxin.</text>
</comment>
<comment type="similarity">
    <text evidence="4">Belongs to the peroxiredoxin family. BCP/PrxQ subfamily.</text>
</comment>
<name>BCP_HELPJ</name>
<protein>
    <recommendedName>
        <fullName>Putative peroxiredoxin bcp</fullName>
        <ecNumber evidence="1">1.11.1.24</ecNumber>
    </recommendedName>
    <alternativeName>
        <fullName>Bacterioferritin comigratory protein homolog</fullName>
    </alternativeName>
    <alternativeName>
        <fullName>Thioredoxin peroxidase</fullName>
    </alternativeName>
    <alternativeName>
        <fullName evidence="4">Thioredoxin-dependent peroxiredoxin Bcp</fullName>
    </alternativeName>
</protein>